<proteinExistence type="inferred from homology"/>
<organism>
    <name type="scientific">Bdellovibrio bacteriovorus (strain ATCC 15356 / DSM 50701 / NCIMB 9529 / HD100)</name>
    <dbReference type="NCBI Taxonomy" id="264462"/>
    <lineage>
        <taxon>Bacteria</taxon>
        <taxon>Pseudomonadati</taxon>
        <taxon>Bdellovibrionota</taxon>
        <taxon>Bdellovibrionia</taxon>
        <taxon>Bdellovibrionales</taxon>
        <taxon>Pseudobdellovibrionaceae</taxon>
        <taxon>Bdellovibrio</taxon>
    </lineage>
</organism>
<gene>
    <name evidence="1" type="primary">ftsH1</name>
    <name type="ordered locus">Bd1928</name>
</gene>
<reference key="1">
    <citation type="journal article" date="2004" name="Science">
        <title>A predator unmasked: life cycle of Bdellovibrio bacteriovorus from a genomic perspective.</title>
        <authorList>
            <person name="Rendulic S."/>
            <person name="Jagtap P."/>
            <person name="Rosinus A."/>
            <person name="Eppinger M."/>
            <person name="Baar C."/>
            <person name="Lanz C."/>
            <person name="Keller H."/>
            <person name="Lambert C."/>
            <person name="Evans K.J."/>
            <person name="Goesmann A."/>
            <person name="Meyer F."/>
            <person name="Sockett R.E."/>
            <person name="Schuster S.C."/>
        </authorList>
    </citation>
    <scope>NUCLEOTIDE SEQUENCE [LARGE SCALE GENOMIC DNA]</scope>
    <source>
        <strain>ATCC 15356 / DSM 50701 / NCIMB 9529 / HD100</strain>
    </source>
</reference>
<accession>Q6MLS7</accession>
<protein>
    <recommendedName>
        <fullName evidence="1">ATP-dependent zinc metalloprotease FtsH 1</fullName>
        <ecNumber evidence="1">3.4.24.-</ecNumber>
    </recommendedName>
</protein>
<dbReference type="EC" id="3.4.24.-" evidence="1"/>
<dbReference type="EMBL" id="BX842651">
    <property type="protein sequence ID" value="CAE79779.1"/>
    <property type="molecule type" value="Genomic_DNA"/>
</dbReference>
<dbReference type="RefSeq" id="WP_011164381.1">
    <property type="nucleotide sequence ID" value="NC_005363.1"/>
</dbReference>
<dbReference type="SMR" id="Q6MLS7"/>
<dbReference type="STRING" id="264462.Bd1928"/>
<dbReference type="MEROPS" id="M41.001"/>
<dbReference type="GeneID" id="93012883"/>
<dbReference type="KEGG" id="bba:Bd1928"/>
<dbReference type="eggNOG" id="COG0465">
    <property type="taxonomic scope" value="Bacteria"/>
</dbReference>
<dbReference type="HOGENOM" id="CLU_000688_16_2_7"/>
<dbReference type="Proteomes" id="UP000008080">
    <property type="component" value="Chromosome"/>
</dbReference>
<dbReference type="GO" id="GO:0005886">
    <property type="term" value="C:plasma membrane"/>
    <property type="evidence" value="ECO:0007669"/>
    <property type="project" value="UniProtKB-SubCell"/>
</dbReference>
<dbReference type="GO" id="GO:0005524">
    <property type="term" value="F:ATP binding"/>
    <property type="evidence" value="ECO:0007669"/>
    <property type="project" value="UniProtKB-UniRule"/>
</dbReference>
<dbReference type="GO" id="GO:0016887">
    <property type="term" value="F:ATP hydrolysis activity"/>
    <property type="evidence" value="ECO:0007669"/>
    <property type="project" value="UniProtKB-UniRule"/>
</dbReference>
<dbReference type="GO" id="GO:0004176">
    <property type="term" value="F:ATP-dependent peptidase activity"/>
    <property type="evidence" value="ECO:0007669"/>
    <property type="project" value="InterPro"/>
</dbReference>
<dbReference type="GO" id="GO:0004222">
    <property type="term" value="F:metalloendopeptidase activity"/>
    <property type="evidence" value="ECO:0007669"/>
    <property type="project" value="InterPro"/>
</dbReference>
<dbReference type="GO" id="GO:0008270">
    <property type="term" value="F:zinc ion binding"/>
    <property type="evidence" value="ECO:0007669"/>
    <property type="project" value="UniProtKB-UniRule"/>
</dbReference>
<dbReference type="GO" id="GO:0030163">
    <property type="term" value="P:protein catabolic process"/>
    <property type="evidence" value="ECO:0007669"/>
    <property type="project" value="UniProtKB-UniRule"/>
</dbReference>
<dbReference type="GO" id="GO:0006508">
    <property type="term" value="P:proteolysis"/>
    <property type="evidence" value="ECO:0007669"/>
    <property type="project" value="UniProtKB-KW"/>
</dbReference>
<dbReference type="CDD" id="cd19501">
    <property type="entry name" value="RecA-like_FtsH"/>
    <property type="match status" value="1"/>
</dbReference>
<dbReference type="FunFam" id="1.10.8.60:FF:000001">
    <property type="entry name" value="ATP-dependent zinc metalloprotease FtsH"/>
    <property type="match status" value="1"/>
</dbReference>
<dbReference type="FunFam" id="1.20.58.760:FF:000001">
    <property type="entry name" value="ATP-dependent zinc metalloprotease FtsH"/>
    <property type="match status" value="1"/>
</dbReference>
<dbReference type="FunFam" id="3.40.50.300:FF:000001">
    <property type="entry name" value="ATP-dependent zinc metalloprotease FtsH"/>
    <property type="match status" value="1"/>
</dbReference>
<dbReference type="Gene3D" id="1.10.8.60">
    <property type="match status" value="1"/>
</dbReference>
<dbReference type="Gene3D" id="3.40.50.300">
    <property type="entry name" value="P-loop containing nucleotide triphosphate hydrolases"/>
    <property type="match status" value="1"/>
</dbReference>
<dbReference type="Gene3D" id="1.20.58.760">
    <property type="entry name" value="Peptidase M41"/>
    <property type="match status" value="1"/>
</dbReference>
<dbReference type="HAMAP" id="MF_01458">
    <property type="entry name" value="FtsH"/>
    <property type="match status" value="1"/>
</dbReference>
<dbReference type="InterPro" id="IPR003593">
    <property type="entry name" value="AAA+_ATPase"/>
</dbReference>
<dbReference type="InterPro" id="IPR041569">
    <property type="entry name" value="AAA_lid_3"/>
</dbReference>
<dbReference type="InterPro" id="IPR003959">
    <property type="entry name" value="ATPase_AAA_core"/>
</dbReference>
<dbReference type="InterPro" id="IPR003960">
    <property type="entry name" value="ATPase_AAA_CS"/>
</dbReference>
<dbReference type="InterPro" id="IPR005936">
    <property type="entry name" value="FtsH"/>
</dbReference>
<dbReference type="InterPro" id="IPR027417">
    <property type="entry name" value="P-loop_NTPase"/>
</dbReference>
<dbReference type="InterPro" id="IPR011546">
    <property type="entry name" value="Pept_M41_FtsH_extracell"/>
</dbReference>
<dbReference type="InterPro" id="IPR000642">
    <property type="entry name" value="Peptidase_M41"/>
</dbReference>
<dbReference type="InterPro" id="IPR037219">
    <property type="entry name" value="Peptidase_M41-like"/>
</dbReference>
<dbReference type="NCBIfam" id="TIGR01241">
    <property type="entry name" value="FtsH_fam"/>
    <property type="match status" value="1"/>
</dbReference>
<dbReference type="PANTHER" id="PTHR23076:SF97">
    <property type="entry name" value="ATP-DEPENDENT ZINC METALLOPROTEASE YME1L1"/>
    <property type="match status" value="1"/>
</dbReference>
<dbReference type="PANTHER" id="PTHR23076">
    <property type="entry name" value="METALLOPROTEASE M41 FTSH"/>
    <property type="match status" value="1"/>
</dbReference>
<dbReference type="Pfam" id="PF00004">
    <property type="entry name" value="AAA"/>
    <property type="match status" value="1"/>
</dbReference>
<dbReference type="Pfam" id="PF17862">
    <property type="entry name" value="AAA_lid_3"/>
    <property type="match status" value="1"/>
</dbReference>
<dbReference type="Pfam" id="PF06480">
    <property type="entry name" value="FtsH_ext"/>
    <property type="match status" value="1"/>
</dbReference>
<dbReference type="Pfam" id="PF01434">
    <property type="entry name" value="Peptidase_M41"/>
    <property type="match status" value="1"/>
</dbReference>
<dbReference type="SMART" id="SM00382">
    <property type="entry name" value="AAA"/>
    <property type="match status" value="1"/>
</dbReference>
<dbReference type="SUPFAM" id="SSF140990">
    <property type="entry name" value="FtsH protease domain-like"/>
    <property type="match status" value="1"/>
</dbReference>
<dbReference type="SUPFAM" id="SSF52540">
    <property type="entry name" value="P-loop containing nucleoside triphosphate hydrolases"/>
    <property type="match status" value="1"/>
</dbReference>
<dbReference type="PROSITE" id="PS00674">
    <property type="entry name" value="AAA"/>
    <property type="match status" value="1"/>
</dbReference>
<feature type="chain" id="PRO_0000400330" description="ATP-dependent zinc metalloprotease FtsH 1">
    <location>
        <begin position="1"/>
        <end position="645"/>
    </location>
</feature>
<feature type="topological domain" description="Cytoplasmic" evidence="1">
    <location>
        <begin position="1"/>
        <end position="6"/>
    </location>
</feature>
<feature type="transmembrane region" description="Helical" evidence="1">
    <location>
        <begin position="7"/>
        <end position="27"/>
    </location>
</feature>
<feature type="topological domain" description="Periplasmic" evidence="1">
    <location>
        <begin position="28"/>
        <end position="110"/>
    </location>
</feature>
<feature type="transmembrane region" description="Helical" evidence="1">
    <location>
        <begin position="111"/>
        <end position="131"/>
    </location>
</feature>
<feature type="topological domain" description="Cytoplasmic" evidence="1">
    <location>
        <begin position="132"/>
        <end position="645"/>
    </location>
</feature>
<feature type="active site" evidence="1">
    <location>
        <position position="426"/>
    </location>
</feature>
<feature type="binding site" evidence="1">
    <location>
        <begin position="203"/>
        <end position="210"/>
    </location>
    <ligand>
        <name>ATP</name>
        <dbReference type="ChEBI" id="CHEBI:30616"/>
    </ligand>
</feature>
<feature type="binding site" evidence="1">
    <location>
        <position position="425"/>
    </location>
    <ligand>
        <name>Zn(2+)</name>
        <dbReference type="ChEBI" id="CHEBI:29105"/>
        <note>catalytic</note>
    </ligand>
</feature>
<feature type="binding site" evidence="1">
    <location>
        <position position="429"/>
    </location>
    <ligand>
        <name>Zn(2+)</name>
        <dbReference type="ChEBI" id="CHEBI:29105"/>
        <note>catalytic</note>
    </ligand>
</feature>
<feature type="binding site" evidence="1">
    <location>
        <position position="501"/>
    </location>
    <ligand>
        <name>Zn(2+)</name>
        <dbReference type="ChEBI" id="CHEBI:29105"/>
        <note>catalytic</note>
    </ligand>
</feature>
<comment type="function">
    <text evidence="1">Acts as a processive, ATP-dependent zinc metallopeptidase for both cytoplasmic and membrane proteins. Plays a role in the quality control of integral membrane proteins.</text>
</comment>
<comment type="cofactor">
    <cofactor evidence="1">
        <name>Zn(2+)</name>
        <dbReference type="ChEBI" id="CHEBI:29105"/>
    </cofactor>
    <text evidence="1">Binds 1 zinc ion per subunit.</text>
</comment>
<comment type="subunit">
    <text evidence="1">Homohexamer.</text>
</comment>
<comment type="subcellular location">
    <subcellularLocation>
        <location evidence="1">Cell inner membrane</location>
        <topology evidence="1">Multi-pass membrane protein</topology>
        <orientation evidence="1">Cytoplasmic side</orientation>
    </subcellularLocation>
</comment>
<comment type="similarity">
    <text evidence="1">In the central section; belongs to the AAA ATPase family.</text>
</comment>
<comment type="similarity">
    <text evidence="1">In the C-terminal section; belongs to the peptidase M41 family.</text>
</comment>
<sequence length="645" mass="70985">MRSTQKTLALWFFLIIMAVFLFQAYESKQQKAIADFNFSKFTEAVKAGEVATVTFRQDTSEVVGEMKPEFEKKYNGTHFSIVGNTQDEGYKFLQQHGITPNYERADNGGFFQSLLVNWLPLILIVAMFLFIMRQIQAGGGKAMSFGKSRARLLTEHKNRVTFKEVAGVDEAKEDLQEIVSFLKDPKKYTKLGGRIPKGVLLVGSPGTGKTLLARAVAGEAGVPFFTISGSDFVEMFVGVGASRVRDLFEQGKKNAPCLIFIDEIDAVGRHRGAGMGGGHDEREQTLNQLLVEMDGFESSEGVIMIAATNRPDVLDPALLRPGRFDRRVIVNKPDLKGREQILAVHMRKTPLGPDVDASKIARGTPGFSGADLENLVNEAALVAARSDKKYLEMEDFEKAKDKVTMGAERRSMVISDEDKKVTAYHEAGHTLVGKKLVGLDPIHKVTIIPRGMALGVTQTLPEKESVSLSKSKAENMIAFLFGGRAAEELIFKDITTGAGNDIERATEIARRMVCEWGMSKLGPLAYETRDNPVFMGMGYGNKSKEYSDAKAQEIDTEVEKIIKHGYDISIQILRDHQDALERLTQALLEYETIDGHEVDMLVNGAAVAEIEKYRNAKKDSNAAIMNAAEKKGSGDPVGNTGPVTI</sequence>
<evidence type="ECO:0000255" key="1">
    <source>
        <dbReference type="HAMAP-Rule" id="MF_01458"/>
    </source>
</evidence>
<keyword id="KW-0067">ATP-binding</keyword>
<keyword id="KW-0997">Cell inner membrane</keyword>
<keyword id="KW-1003">Cell membrane</keyword>
<keyword id="KW-0378">Hydrolase</keyword>
<keyword id="KW-0472">Membrane</keyword>
<keyword id="KW-0479">Metal-binding</keyword>
<keyword id="KW-0482">Metalloprotease</keyword>
<keyword id="KW-0547">Nucleotide-binding</keyword>
<keyword id="KW-0645">Protease</keyword>
<keyword id="KW-1185">Reference proteome</keyword>
<keyword id="KW-0812">Transmembrane</keyword>
<keyword id="KW-1133">Transmembrane helix</keyword>
<keyword id="KW-0862">Zinc</keyword>
<name>FTSH1_BDEBA</name>